<accession>Q1CDA2</accession>
<accession>D1Q251</accession>
<gene>
    <name evidence="1" type="primary">selA</name>
    <name type="ordered locus">YPN_3701</name>
    <name type="ORF">YP516_4206</name>
</gene>
<reference key="1">
    <citation type="journal article" date="2006" name="J. Bacteriol.">
        <title>Complete genome sequence of Yersinia pestis strains Antiqua and Nepal516: evidence of gene reduction in an emerging pathogen.</title>
        <authorList>
            <person name="Chain P.S.G."/>
            <person name="Hu P."/>
            <person name="Malfatti S.A."/>
            <person name="Radnedge L."/>
            <person name="Larimer F."/>
            <person name="Vergez L.M."/>
            <person name="Worsham P."/>
            <person name="Chu M.C."/>
            <person name="Andersen G.L."/>
        </authorList>
    </citation>
    <scope>NUCLEOTIDE SEQUENCE [LARGE SCALE GENOMIC DNA]</scope>
    <source>
        <strain>Nepal516</strain>
    </source>
</reference>
<reference key="2">
    <citation type="submission" date="2009-04" db="EMBL/GenBank/DDBJ databases">
        <title>Yersinia pestis Nepal516A whole genome shotgun sequencing project.</title>
        <authorList>
            <person name="Plunkett G. III"/>
            <person name="Anderson B.D."/>
            <person name="Baumler D.J."/>
            <person name="Burland V."/>
            <person name="Cabot E.L."/>
            <person name="Glasner J.D."/>
            <person name="Mau B."/>
            <person name="Neeno-Eckwall E."/>
            <person name="Perna N.T."/>
            <person name="Munk A.C."/>
            <person name="Tapia R."/>
            <person name="Green L.D."/>
            <person name="Rogers Y.C."/>
            <person name="Detter J.C."/>
            <person name="Bruce D.C."/>
            <person name="Brettin T.S."/>
        </authorList>
    </citation>
    <scope>NUCLEOTIDE SEQUENCE [LARGE SCALE GENOMIC DNA]</scope>
    <source>
        <strain>Nepal516</strain>
    </source>
</reference>
<comment type="function">
    <text evidence="1">Converts seryl-tRNA(Sec) to selenocysteinyl-tRNA(Sec) required for selenoprotein biosynthesis.</text>
</comment>
<comment type="catalytic activity">
    <reaction evidence="1">
        <text>L-seryl-tRNA(Sec) + selenophosphate + H(+) = L-selenocysteinyl-tRNA(Sec) + phosphate</text>
        <dbReference type="Rhea" id="RHEA:22728"/>
        <dbReference type="Rhea" id="RHEA-COMP:9742"/>
        <dbReference type="Rhea" id="RHEA-COMP:9743"/>
        <dbReference type="ChEBI" id="CHEBI:15378"/>
        <dbReference type="ChEBI" id="CHEBI:16144"/>
        <dbReference type="ChEBI" id="CHEBI:43474"/>
        <dbReference type="ChEBI" id="CHEBI:78533"/>
        <dbReference type="ChEBI" id="CHEBI:78573"/>
        <dbReference type="EC" id="2.9.1.1"/>
    </reaction>
</comment>
<comment type="cofactor">
    <cofactor evidence="1">
        <name>pyridoxal 5'-phosphate</name>
        <dbReference type="ChEBI" id="CHEBI:597326"/>
    </cofactor>
</comment>
<comment type="pathway">
    <text evidence="1">Aminoacyl-tRNA biosynthesis; selenocysteinyl-tRNA(Sec) biosynthesis; selenocysteinyl-tRNA(Sec) from L-seryl-tRNA(Sec) (bacterial route): step 1/1.</text>
</comment>
<comment type="subunit">
    <text evidence="1">Homodecamer; pentamer of dimers. Binds only one seryl-tRNA(Sec) per dimer.</text>
</comment>
<comment type="subcellular location">
    <subcellularLocation>
        <location evidence="1">Cytoplasm</location>
    </subcellularLocation>
</comment>
<comment type="similarity">
    <text evidence="1">Belongs to the SelA family.</text>
</comment>
<keyword id="KW-0963">Cytoplasm</keyword>
<keyword id="KW-0648">Protein biosynthesis</keyword>
<keyword id="KW-0663">Pyridoxal phosphate</keyword>
<keyword id="KW-0711">Selenium</keyword>
<keyword id="KW-0808">Transferase</keyword>
<proteinExistence type="inferred from homology"/>
<name>SELA_YERPN</name>
<protein>
    <recommendedName>
        <fullName evidence="1">L-seryl-tRNA(Sec) selenium transferase</fullName>
        <ecNumber evidence="1">2.9.1.1</ecNumber>
    </recommendedName>
    <alternativeName>
        <fullName evidence="1">Selenocysteine synthase</fullName>
        <shortName evidence="1">Sec synthase</shortName>
    </alternativeName>
    <alternativeName>
        <fullName evidence="1">Selenocysteinyl-tRNA(Sec) synthase</fullName>
    </alternativeName>
</protein>
<organism>
    <name type="scientific">Yersinia pestis bv. Antiqua (strain Nepal516)</name>
    <dbReference type="NCBI Taxonomy" id="377628"/>
    <lineage>
        <taxon>Bacteria</taxon>
        <taxon>Pseudomonadati</taxon>
        <taxon>Pseudomonadota</taxon>
        <taxon>Gammaproteobacteria</taxon>
        <taxon>Enterobacterales</taxon>
        <taxon>Yersiniaceae</taxon>
        <taxon>Yersinia</taxon>
    </lineage>
</organism>
<sequence>MSAEPHPLYRQLPAIDRLLNEPEMAPLLAEYGPVLLADTLRQLQAEAREYIGQFHTLADWCADWPAALRQRLNQRQPALKPVFNLTGTVLHTNLGRAPLAESAIAAVTDAMRSAVTLEYSLEGAGRGHRDRAVADLLCALTGAEDACIVNNNAAAVFLLLTVMAAGKQVVVSRGELVEIGGAFRIPDVMRQAGCELVEVGTTNRTHLKDYRQAINENTGLLMKVHTSNYSIEGFTAAVSEQQLAALGQECSIPTATDLGSGSLVDMTRYGLPAEPMPQQLIAAGVDLVTFSGDKLLGGPQAGIILGKKQWIERLQQHPLKRALRADKMTLAALDATLRLYQQPDRLVEQLPSLRLLTRPASEIAACAQRLLAPLIACYGTDFTLDIESCWSQIGSGSLPVDRLPSWALTFTPKDGRGSTLEALTARWRTLTKPVIGRVADGRLWLDLRCLEDEAALLRELAS</sequence>
<dbReference type="EC" id="2.9.1.1" evidence="1"/>
<dbReference type="EMBL" id="CP000305">
    <property type="protein sequence ID" value="ABG20028.1"/>
    <property type="molecule type" value="Genomic_DNA"/>
</dbReference>
<dbReference type="EMBL" id="ACNQ01000019">
    <property type="protein sequence ID" value="EEO74604.1"/>
    <property type="molecule type" value="Genomic_DNA"/>
</dbReference>
<dbReference type="RefSeq" id="WP_002209608.1">
    <property type="nucleotide sequence ID" value="NZ_ACNQ01000019.1"/>
</dbReference>
<dbReference type="SMR" id="Q1CDA2"/>
<dbReference type="GeneID" id="57974660"/>
<dbReference type="KEGG" id="ypn:YPN_3701"/>
<dbReference type="HOGENOM" id="CLU_038142_1_0_6"/>
<dbReference type="UniPathway" id="UPA00906">
    <property type="reaction ID" value="UER00896"/>
</dbReference>
<dbReference type="Proteomes" id="UP000008936">
    <property type="component" value="Chromosome"/>
</dbReference>
<dbReference type="GO" id="GO:0005737">
    <property type="term" value="C:cytoplasm"/>
    <property type="evidence" value="ECO:0007669"/>
    <property type="project" value="UniProtKB-SubCell"/>
</dbReference>
<dbReference type="GO" id="GO:0004125">
    <property type="term" value="F:L-seryl-tRNA(Sec) selenium transferase activity"/>
    <property type="evidence" value="ECO:0007669"/>
    <property type="project" value="UniProtKB-UniRule"/>
</dbReference>
<dbReference type="GO" id="GO:0001717">
    <property type="term" value="P:conversion of seryl-tRNAsec to selenocys-tRNAsec"/>
    <property type="evidence" value="ECO:0007669"/>
    <property type="project" value="UniProtKB-UniRule"/>
</dbReference>
<dbReference type="GO" id="GO:0001514">
    <property type="term" value="P:selenocysteine incorporation"/>
    <property type="evidence" value="ECO:0007669"/>
    <property type="project" value="UniProtKB-UniRule"/>
</dbReference>
<dbReference type="FunFam" id="3.40.640.10:FF:000028">
    <property type="entry name" value="L-seryl-tRNA(Sec) selenium transferase"/>
    <property type="match status" value="1"/>
</dbReference>
<dbReference type="Gene3D" id="3.90.1150.180">
    <property type="match status" value="1"/>
</dbReference>
<dbReference type="Gene3D" id="3.40.640.10">
    <property type="entry name" value="Type I PLP-dependent aspartate aminotransferase-like (Major domain)"/>
    <property type="match status" value="1"/>
</dbReference>
<dbReference type="HAMAP" id="MF_00423">
    <property type="entry name" value="SelA"/>
    <property type="match status" value="1"/>
</dbReference>
<dbReference type="InterPro" id="IPR015424">
    <property type="entry name" value="PyrdxlP-dep_Trfase"/>
</dbReference>
<dbReference type="InterPro" id="IPR015421">
    <property type="entry name" value="PyrdxlP-dep_Trfase_major"/>
</dbReference>
<dbReference type="InterPro" id="IPR018319">
    <property type="entry name" value="SelA-like"/>
</dbReference>
<dbReference type="InterPro" id="IPR004534">
    <property type="entry name" value="SelA_trans"/>
</dbReference>
<dbReference type="InterPro" id="IPR025862">
    <property type="entry name" value="SelA_trans_N_dom"/>
</dbReference>
<dbReference type="NCBIfam" id="TIGR00474">
    <property type="entry name" value="selA"/>
    <property type="match status" value="1"/>
</dbReference>
<dbReference type="PANTHER" id="PTHR32328">
    <property type="entry name" value="L-SERYL-TRNA(SEC) SELENIUM TRANSFERASE"/>
    <property type="match status" value="1"/>
</dbReference>
<dbReference type="PANTHER" id="PTHR32328:SF0">
    <property type="entry name" value="L-SERYL-TRNA(SEC) SELENIUM TRANSFERASE"/>
    <property type="match status" value="1"/>
</dbReference>
<dbReference type="Pfam" id="PF12390">
    <property type="entry name" value="Se-cys_synth_N"/>
    <property type="match status" value="1"/>
</dbReference>
<dbReference type="Pfam" id="PF03841">
    <property type="entry name" value="SelA"/>
    <property type="match status" value="1"/>
</dbReference>
<dbReference type="SUPFAM" id="SSF53383">
    <property type="entry name" value="PLP-dependent transferases"/>
    <property type="match status" value="1"/>
</dbReference>
<evidence type="ECO:0000255" key="1">
    <source>
        <dbReference type="HAMAP-Rule" id="MF_00423"/>
    </source>
</evidence>
<feature type="chain" id="PRO_1000050388" description="L-seryl-tRNA(Sec) selenium transferase">
    <location>
        <begin position="1"/>
        <end position="462"/>
    </location>
</feature>
<feature type="modified residue" description="N6-(pyridoxal phosphate)lysine" evidence="1">
    <location>
        <position position="294"/>
    </location>
</feature>